<sequence>MANNSNSGSELEVDDTLQSICYNRGSLKLLDQRKLPLETEFLDIRNSSDGWSAIREMVVRGAPAIAIAAALSLAVEVFNFDDFTGTSNDAASFLFKKLEYLVSSRPTAVNLSDAANKLKEVIYKAAATASDSNSVFQAYIEAAEIMLKDDIASNKAIGSHGASFIQNQLKNPQRLSILTHCNTGSLATAGYGTALGVIRALHAAGVLRRAYCTETRPFNQGSRLTAFELVHEKIPATLVADSAAAALMKDDQVSAVIVGADRVAANGDTANKIGTYSLALCAMHHNIPFYVAAPLTSVDLSLSSGKHIVIEERSPKELLNSRGGLGEQVAASGISVWNPAFDVTPANLISGIITEKGVITKIDSSDFDIKNFVKRTAGQSVA</sequence>
<dbReference type="EC" id="5.3.1.23" evidence="1"/>
<dbReference type="EMBL" id="EQ973802">
    <property type="protein sequence ID" value="EEF46259.1"/>
    <property type="molecule type" value="Genomic_DNA"/>
</dbReference>
<dbReference type="RefSeq" id="XP_002516257.1">
    <property type="nucleotide sequence ID" value="XM_002516211.2"/>
</dbReference>
<dbReference type="SMR" id="B9RR88"/>
<dbReference type="FunCoup" id="B9RR88">
    <property type="interactions" value="2859"/>
</dbReference>
<dbReference type="STRING" id="3988.B9RR88"/>
<dbReference type="KEGG" id="rcu:8281157"/>
<dbReference type="eggNOG" id="KOG1468">
    <property type="taxonomic scope" value="Eukaryota"/>
</dbReference>
<dbReference type="InParanoid" id="B9RR88"/>
<dbReference type="OMA" id="CETRPLN"/>
<dbReference type="OrthoDB" id="2461at2759"/>
<dbReference type="UniPathway" id="UPA00904">
    <property type="reaction ID" value="UER00874"/>
</dbReference>
<dbReference type="Proteomes" id="UP000008311">
    <property type="component" value="Unassembled WGS sequence"/>
</dbReference>
<dbReference type="GO" id="GO:0005737">
    <property type="term" value="C:cytoplasm"/>
    <property type="evidence" value="ECO:0007669"/>
    <property type="project" value="UniProtKB-SubCell"/>
</dbReference>
<dbReference type="GO" id="GO:0005634">
    <property type="term" value="C:nucleus"/>
    <property type="evidence" value="ECO:0007669"/>
    <property type="project" value="UniProtKB-SubCell"/>
</dbReference>
<dbReference type="GO" id="GO:0046523">
    <property type="term" value="F:S-methyl-5-thioribose-1-phosphate isomerase activity"/>
    <property type="evidence" value="ECO:0000318"/>
    <property type="project" value="GO_Central"/>
</dbReference>
<dbReference type="GO" id="GO:0019509">
    <property type="term" value="P:L-methionine salvage from methylthioadenosine"/>
    <property type="evidence" value="ECO:0000318"/>
    <property type="project" value="GO_Central"/>
</dbReference>
<dbReference type="FunFam" id="1.20.120.420:FF:000002">
    <property type="entry name" value="Methylthioribose-1-phosphate isomerase"/>
    <property type="match status" value="1"/>
</dbReference>
<dbReference type="FunFam" id="3.40.50.10470:FF:000003">
    <property type="entry name" value="Methylthioribose-1-phosphate isomerase"/>
    <property type="match status" value="1"/>
</dbReference>
<dbReference type="Gene3D" id="1.20.120.420">
    <property type="entry name" value="translation initiation factor eif-2b, domain 1"/>
    <property type="match status" value="1"/>
</dbReference>
<dbReference type="Gene3D" id="3.40.50.10470">
    <property type="entry name" value="Translation initiation factor eif-2b, domain 2"/>
    <property type="match status" value="1"/>
</dbReference>
<dbReference type="HAMAP" id="MF_01678">
    <property type="entry name" value="Salvage_MtnA"/>
    <property type="match status" value="1"/>
</dbReference>
<dbReference type="InterPro" id="IPR000649">
    <property type="entry name" value="IF-2B-related"/>
</dbReference>
<dbReference type="InterPro" id="IPR005251">
    <property type="entry name" value="IF-M1Pi"/>
</dbReference>
<dbReference type="InterPro" id="IPR042529">
    <property type="entry name" value="IF_2B-like_C"/>
</dbReference>
<dbReference type="InterPro" id="IPR011559">
    <property type="entry name" value="Initiation_fac_2B_a/b/d"/>
</dbReference>
<dbReference type="InterPro" id="IPR027363">
    <property type="entry name" value="M1Pi_N"/>
</dbReference>
<dbReference type="InterPro" id="IPR037171">
    <property type="entry name" value="NagB/RpiA_transferase-like"/>
</dbReference>
<dbReference type="NCBIfam" id="TIGR00524">
    <property type="entry name" value="eIF-2B_rel"/>
    <property type="match status" value="1"/>
</dbReference>
<dbReference type="NCBIfam" id="NF004326">
    <property type="entry name" value="PRK05720.1"/>
    <property type="match status" value="1"/>
</dbReference>
<dbReference type="NCBIfam" id="TIGR00512">
    <property type="entry name" value="salvage_mtnA"/>
    <property type="match status" value="1"/>
</dbReference>
<dbReference type="PANTHER" id="PTHR43475">
    <property type="entry name" value="METHYLTHIORIBOSE-1-PHOSPHATE ISOMERASE"/>
    <property type="match status" value="1"/>
</dbReference>
<dbReference type="PANTHER" id="PTHR43475:SF1">
    <property type="entry name" value="METHYLTHIORIBOSE-1-PHOSPHATE ISOMERASE"/>
    <property type="match status" value="1"/>
</dbReference>
<dbReference type="Pfam" id="PF01008">
    <property type="entry name" value="IF-2B"/>
    <property type="match status" value="1"/>
</dbReference>
<dbReference type="SUPFAM" id="SSF100950">
    <property type="entry name" value="NagB/RpiA/CoA transferase-like"/>
    <property type="match status" value="1"/>
</dbReference>
<organism>
    <name type="scientific">Ricinus communis</name>
    <name type="common">Castor bean</name>
    <dbReference type="NCBI Taxonomy" id="3988"/>
    <lineage>
        <taxon>Eukaryota</taxon>
        <taxon>Viridiplantae</taxon>
        <taxon>Streptophyta</taxon>
        <taxon>Embryophyta</taxon>
        <taxon>Tracheophyta</taxon>
        <taxon>Spermatophyta</taxon>
        <taxon>Magnoliopsida</taxon>
        <taxon>eudicotyledons</taxon>
        <taxon>Gunneridae</taxon>
        <taxon>Pentapetalae</taxon>
        <taxon>rosids</taxon>
        <taxon>fabids</taxon>
        <taxon>Malpighiales</taxon>
        <taxon>Euphorbiaceae</taxon>
        <taxon>Acalyphoideae</taxon>
        <taxon>Acalypheae</taxon>
        <taxon>Ricinus</taxon>
    </lineage>
</organism>
<feature type="chain" id="PRO_0000401996" description="Methylthioribose-1-phosphate isomerase">
    <location>
        <begin position="1"/>
        <end position="382"/>
    </location>
</feature>
<feature type="active site" description="Proton donor" evidence="1">
    <location>
        <position position="261"/>
    </location>
</feature>
<feature type="site" description="Transition state stabilizer" evidence="1">
    <location>
        <position position="181"/>
    </location>
</feature>
<keyword id="KW-0028">Amino-acid biosynthesis</keyword>
<keyword id="KW-0963">Cytoplasm</keyword>
<keyword id="KW-0413">Isomerase</keyword>
<keyword id="KW-0486">Methionine biosynthesis</keyword>
<keyword id="KW-0539">Nucleus</keyword>
<keyword id="KW-1185">Reference proteome</keyword>
<protein>
    <recommendedName>
        <fullName evidence="1">Methylthioribose-1-phosphate isomerase</fullName>
        <shortName evidence="1">M1Pi</shortName>
        <shortName evidence="1">MTR-1-P isomerase</shortName>
        <ecNumber evidence="1">5.3.1.23</ecNumber>
    </recommendedName>
    <alternativeName>
        <fullName evidence="1">S-methyl-5-thioribose-1-phosphate isomerase</fullName>
    </alternativeName>
    <alternativeName>
        <fullName evidence="1">Translation initiation factor eIF-2B subunit alpha/beta/delta-like protein</fullName>
    </alternativeName>
</protein>
<evidence type="ECO:0000255" key="1">
    <source>
        <dbReference type="HAMAP-Rule" id="MF_03119"/>
    </source>
</evidence>
<reference key="1">
    <citation type="journal article" date="2010" name="Nat. Biotechnol.">
        <title>Draft genome sequence of the oilseed species Ricinus communis.</title>
        <authorList>
            <person name="Chan A.P."/>
            <person name="Crabtree J."/>
            <person name="Zhao Q."/>
            <person name="Lorenzi H."/>
            <person name="Orvis J."/>
            <person name="Puiu D."/>
            <person name="Melake-Berhan A."/>
            <person name="Jones K.M."/>
            <person name="Redman J."/>
            <person name="Chen G."/>
            <person name="Cahoon E.B."/>
            <person name="Gedil M."/>
            <person name="Stanke M."/>
            <person name="Haas B.J."/>
            <person name="Wortman J.R."/>
            <person name="Fraser-Liggett C.M."/>
            <person name="Ravel J."/>
            <person name="Rabinowicz P.D."/>
        </authorList>
    </citation>
    <scope>NUCLEOTIDE SEQUENCE [LARGE SCALE GENOMIC DNA]</scope>
    <source>
        <strain>cv. Hale</strain>
    </source>
</reference>
<comment type="function">
    <text evidence="1">Catalyzes the interconversion of methylthioribose-1-phosphate (MTR-1-P) into methylthioribulose-1-phosphate (MTRu-1-P).</text>
</comment>
<comment type="catalytic activity">
    <reaction evidence="1">
        <text>5-(methylsulfanyl)-alpha-D-ribose 1-phosphate = 5-(methylsulfanyl)-D-ribulose 1-phosphate</text>
        <dbReference type="Rhea" id="RHEA:19989"/>
        <dbReference type="ChEBI" id="CHEBI:58533"/>
        <dbReference type="ChEBI" id="CHEBI:58548"/>
        <dbReference type="EC" id="5.3.1.23"/>
    </reaction>
</comment>
<comment type="pathway">
    <text evidence="1">Amino-acid biosynthesis; L-methionine biosynthesis via salvage pathway; L-methionine from S-methyl-5-thio-alpha-D-ribose 1-phosphate: step 1/6.</text>
</comment>
<comment type="subcellular location">
    <subcellularLocation>
        <location evidence="1">Cytoplasm</location>
    </subcellularLocation>
    <subcellularLocation>
        <location evidence="1">Nucleus</location>
    </subcellularLocation>
</comment>
<comment type="similarity">
    <text evidence="1">Belongs to the eIF-2B alpha/beta/delta subunits family. MtnA subfamily.</text>
</comment>
<name>MTNA_RICCO</name>
<proteinExistence type="evidence at transcript level"/>
<gene>
    <name type="ORF">RCOM_0711420</name>
</gene>
<accession>B9RR88</accession>